<keyword id="KW-0479">Metal-binding</keyword>
<keyword id="KW-1185">Reference proteome</keyword>
<proteinExistence type="inferred from homology"/>
<dbReference type="EMBL" id="AE001273">
    <property type="protein sequence ID" value="AAC67699.1"/>
    <property type="molecule type" value="Genomic_DNA"/>
</dbReference>
<dbReference type="PIR" id="C71557">
    <property type="entry name" value="C71557"/>
</dbReference>
<dbReference type="RefSeq" id="NP_219611.1">
    <property type="nucleotide sequence ID" value="NC_000117.1"/>
</dbReference>
<dbReference type="RefSeq" id="WP_009871455.1">
    <property type="nucleotide sequence ID" value="NC_000117.1"/>
</dbReference>
<dbReference type="SMR" id="O84110"/>
<dbReference type="STRING" id="272561.CT_108"/>
<dbReference type="EnsemblBacteria" id="AAC67699">
    <property type="protein sequence ID" value="AAC67699"/>
    <property type="gene ID" value="CT_108"/>
</dbReference>
<dbReference type="GeneID" id="884109"/>
<dbReference type="KEGG" id="ctr:CT_108"/>
<dbReference type="PATRIC" id="fig|272561.5.peg.118"/>
<dbReference type="HOGENOM" id="CLU_037423_3_0_0"/>
<dbReference type="InParanoid" id="O84110"/>
<dbReference type="OrthoDB" id="9792792at2"/>
<dbReference type="Proteomes" id="UP000000431">
    <property type="component" value="Chromosome"/>
</dbReference>
<dbReference type="GO" id="GO:0005737">
    <property type="term" value="C:cytoplasm"/>
    <property type="evidence" value="ECO:0000318"/>
    <property type="project" value="GO_Central"/>
</dbReference>
<dbReference type="GO" id="GO:0046872">
    <property type="term" value="F:metal ion binding"/>
    <property type="evidence" value="ECO:0007669"/>
    <property type="project" value="UniProtKB-KW"/>
</dbReference>
<dbReference type="FunFam" id="3.40.1390.30:FF:000001">
    <property type="entry name" value="GTP cyclohydrolase 1 type 2"/>
    <property type="match status" value="1"/>
</dbReference>
<dbReference type="Gene3D" id="3.40.1390.30">
    <property type="entry name" value="NIF3 (NGG1p interacting factor 3)-like"/>
    <property type="match status" value="2"/>
</dbReference>
<dbReference type="InterPro" id="IPR002678">
    <property type="entry name" value="DUF34/NIF3"/>
</dbReference>
<dbReference type="InterPro" id="IPR036069">
    <property type="entry name" value="DUF34/NIF3_sf"/>
</dbReference>
<dbReference type="NCBIfam" id="TIGR00486">
    <property type="entry name" value="YbgI_SA1388"/>
    <property type="match status" value="1"/>
</dbReference>
<dbReference type="PANTHER" id="PTHR13799:SF14">
    <property type="entry name" value="GTP CYCLOHYDROLASE 1 TYPE 2 HOMOLOG"/>
    <property type="match status" value="1"/>
</dbReference>
<dbReference type="PANTHER" id="PTHR13799">
    <property type="entry name" value="NGG1 INTERACTING FACTOR 3"/>
    <property type="match status" value="1"/>
</dbReference>
<dbReference type="Pfam" id="PF01784">
    <property type="entry name" value="DUF34_NIF3"/>
    <property type="match status" value="1"/>
</dbReference>
<dbReference type="SUPFAM" id="SSF102705">
    <property type="entry name" value="NIF3 (NGG1p interacting factor 3)-like"/>
    <property type="match status" value="1"/>
</dbReference>
<organism>
    <name type="scientific">Chlamydia trachomatis serovar D (strain ATCC VR-885 / DSM 19411 / UW-3/Cx)</name>
    <dbReference type="NCBI Taxonomy" id="272561"/>
    <lineage>
        <taxon>Bacteria</taxon>
        <taxon>Pseudomonadati</taxon>
        <taxon>Chlamydiota</taxon>
        <taxon>Chlamydiia</taxon>
        <taxon>Chlamydiales</taxon>
        <taxon>Chlamydiaceae</taxon>
        <taxon>Chlamydia/Chlamydophila group</taxon>
        <taxon>Chlamydia</taxon>
    </lineage>
</organism>
<accession>O84110</accession>
<sequence>MNVSDLLNILNELLHPEYFSDYGPNGLQVGNAQTAIRKVAVAVTADLATIEKAIACEANVLLVHHGIFWKGMPYSITGILYQRMQRLMEGNIQLIAYHLPLDAHTTIGNNWKVARDLGWEQLESFGSSQPSLGVKGVFPEMEVHDFISQLSAYYQTPVLAKALGGKKRVSSAALISGGAYREISEAKNQQVDCFITGNFDEPAWSLAHELAIHFLAFGHTATEKVGPKALAQYLKGAGLESVVFLDTDNPF</sequence>
<comment type="subunit">
    <text evidence="1">Homohexamer.</text>
</comment>
<comment type="similarity">
    <text evidence="2">Belongs to the GTP cyclohydrolase I type 2/NIF3 family.</text>
</comment>
<protein>
    <recommendedName>
        <fullName>GTP cyclohydrolase 1 type 2 homolog</fullName>
    </recommendedName>
</protein>
<gene>
    <name type="ordered locus">CT_108</name>
</gene>
<feature type="chain" id="PRO_0000147303" description="GTP cyclohydrolase 1 type 2 homolog">
    <location>
        <begin position="1"/>
        <end position="251"/>
    </location>
</feature>
<feature type="binding site" evidence="1">
    <location>
        <position position="64"/>
    </location>
    <ligand>
        <name>a divalent metal cation</name>
        <dbReference type="ChEBI" id="CHEBI:60240"/>
        <label>1</label>
    </ligand>
</feature>
<feature type="binding site" evidence="1">
    <location>
        <position position="65"/>
    </location>
    <ligand>
        <name>a divalent metal cation</name>
        <dbReference type="ChEBI" id="CHEBI:60240"/>
        <label>2</label>
    </ligand>
</feature>
<feature type="binding site" evidence="1">
    <location>
        <position position="102"/>
    </location>
    <ligand>
        <name>a divalent metal cation</name>
        <dbReference type="ChEBI" id="CHEBI:60240"/>
        <label>1</label>
    </ligand>
</feature>
<feature type="binding site" evidence="1">
    <location>
        <position position="219"/>
    </location>
    <ligand>
        <name>a divalent metal cation</name>
        <dbReference type="ChEBI" id="CHEBI:60240"/>
        <label>2</label>
    </ligand>
</feature>
<feature type="binding site" evidence="1">
    <location>
        <position position="223"/>
    </location>
    <ligand>
        <name>a divalent metal cation</name>
        <dbReference type="ChEBI" id="CHEBI:60240"/>
        <label>1</label>
    </ligand>
</feature>
<feature type="binding site" evidence="1">
    <location>
        <position position="223"/>
    </location>
    <ligand>
        <name>a divalent metal cation</name>
        <dbReference type="ChEBI" id="CHEBI:60240"/>
        <label>2</label>
    </ligand>
</feature>
<reference key="1">
    <citation type="journal article" date="1998" name="Science">
        <title>Genome sequence of an obligate intracellular pathogen of humans: Chlamydia trachomatis.</title>
        <authorList>
            <person name="Stephens R.S."/>
            <person name="Kalman S."/>
            <person name="Lammel C.J."/>
            <person name="Fan J."/>
            <person name="Marathe R."/>
            <person name="Aravind L."/>
            <person name="Mitchell W.P."/>
            <person name="Olinger L."/>
            <person name="Tatusov R.L."/>
            <person name="Zhao Q."/>
            <person name="Koonin E.V."/>
            <person name="Davis R.W."/>
        </authorList>
    </citation>
    <scope>NUCLEOTIDE SEQUENCE [LARGE SCALE GENOMIC DNA]</scope>
    <source>
        <strain>ATCC VR-885 / DSM 19411 / UW-3/Cx</strain>
    </source>
</reference>
<evidence type="ECO:0000250" key="1">
    <source>
        <dbReference type="UniProtKB" id="P0AFP6"/>
    </source>
</evidence>
<evidence type="ECO:0000305" key="2"/>
<name>GCH1L_CHLTR</name>